<comment type="function">
    <text evidence="1">Specifically methylates the cytosine at position 967 (m5C967) of 16S rRNA.</text>
</comment>
<comment type="catalytic activity">
    <reaction evidence="1">
        <text>cytidine(967) in 16S rRNA + S-adenosyl-L-methionine = 5-methylcytidine(967) in 16S rRNA + S-adenosyl-L-homocysteine + H(+)</text>
        <dbReference type="Rhea" id="RHEA:42748"/>
        <dbReference type="Rhea" id="RHEA-COMP:10219"/>
        <dbReference type="Rhea" id="RHEA-COMP:10220"/>
        <dbReference type="ChEBI" id="CHEBI:15378"/>
        <dbReference type="ChEBI" id="CHEBI:57856"/>
        <dbReference type="ChEBI" id="CHEBI:59789"/>
        <dbReference type="ChEBI" id="CHEBI:74483"/>
        <dbReference type="ChEBI" id="CHEBI:82748"/>
        <dbReference type="EC" id="2.1.1.176"/>
    </reaction>
</comment>
<comment type="subcellular location">
    <subcellularLocation>
        <location evidence="1">Cytoplasm</location>
    </subcellularLocation>
</comment>
<comment type="similarity">
    <text evidence="1">Belongs to the class I-like SAM-binding methyltransferase superfamily. RsmB/NOP family.</text>
</comment>
<evidence type="ECO:0000255" key="1">
    <source>
        <dbReference type="HAMAP-Rule" id="MF_01856"/>
    </source>
</evidence>
<evidence type="ECO:0000256" key="2">
    <source>
        <dbReference type="SAM" id="MobiDB-lite"/>
    </source>
</evidence>
<accession>B5R1E5</accession>
<proteinExistence type="inferred from homology"/>
<name>RSMB_SALEP</name>
<organism>
    <name type="scientific">Salmonella enteritidis PT4 (strain P125109)</name>
    <dbReference type="NCBI Taxonomy" id="550537"/>
    <lineage>
        <taxon>Bacteria</taxon>
        <taxon>Pseudomonadati</taxon>
        <taxon>Pseudomonadota</taxon>
        <taxon>Gammaproteobacteria</taxon>
        <taxon>Enterobacterales</taxon>
        <taxon>Enterobacteriaceae</taxon>
        <taxon>Salmonella</taxon>
    </lineage>
</organism>
<protein>
    <recommendedName>
        <fullName evidence="1">Ribosomal RNA small subunit methyltransferase B</fullName>
        <ecNumber evidence="1">2.1.1.176</ecNumber>
    </recommendedName>
    <alternativeName>
        <fullName evidence="1">16S rRNA m5C967 methyltransferase</fullName>
    </alternativeName>
    <alternativeName>
        <fullName evidence="1">rRNA (cytosine-C(5)-)-methyltransferase RsmB</fullName>
    </alternativeName>
</protein>
<sequence length="429" mass="48064">MKKQNNLRSLAAQAVELVVEQGQSLSNVLPPLQQKVADKDKALLQELCFGVLRTLSQLEWLINKLMSRPMTGKQRTVHYLIMVGFYQLLYTRVPPHAALAETVEGAVAIKRPQLKGLINGVLRQFQRQQETLLNEFATSDARFLHPGWLVKRLQNAYPTQWQHIIEANNQRPPMWLRVNRTHHTRDGWLGLLEDAGMKGYPHPDYPDAVRLETPAPVHALPGFAEGWVTVQDASAQGCAVFLAPQNGEHILDLCAAPGGKTTHILEVAPEADVLAVDIDEQRLSRVYDNLKRLGMKATVKQGDGRYPAQWCGEQQFDRILLDAPCSATGVIRRHPDIKWLRRDRDIAELAQLQAEILDAVWPRLKPGGTLVYATCSVLPEENRDQIKTFLQRTPDAALSETGTPDQPGQQNLPGGEEGDGFFYAKLIKK</sequence>
<reference key="1">
    <citation type="journal article" date="2008" name="Genome Res.">
        <title>Comparative genome analysis of Salmonella enteritidis PT4 and Salmonella gallinarum 287/91 provides insights into evolutionary and host adaptation pathways.</title>
        <authorList>
            <person name="Thomson N.R."/>
            <person name="Clayton D.J."/>
            <person name="Windhorst D."/>
            <person name="Vernikos G."/>
            <person name="Davidson S."/>
            <person name="Churcher C."/>
            <person name="Quail M.A."/>
            <person name="Stevens M."/>
            <person name="Jones M.A."/>
            <person name="Watson M."/>
            <person name="Barron A."/>
            <person name="Layton A."/>
            <person name="Pickard D."/>
            <person name="Kingsley R.A."/>
            <person name="Bignell A."/>
            <person name="Clark L."/>
            <person name="Harris B."/>
            <person name="Ormond D."/>
            <person name="Abdellah Z."/>
            <person name="Brooks K."/>
            <person name="Cherevach I."/>
            <person name="Chillingworth T."/>
            <person name="Woodward J."/>
            <person name="Norberczak H."/>
            <person name="Lord A."/>
            <person name="Arrowsmith C."/>
            <person name="Jagels K."/>
            <person name="Moule S."/>
            <person name="Mungall K."/>
            <person name="Saunders M."/>
            <person name="Whitehead S."/>
            <person name="Chabalgoity J.A."/>
            <person name="Maskell D."/>
            <person name="Humphreys T."/>
            <person name="Roberts M."/>
            <person name="Barrow P.A."/>
            <person name="Dougan G."/>
            <person name="Parkhill J."/>
        </authorList>
    </citation>
    <scope>NUCLEOTIDE SEQUENCE [LARGE SCALE GENOMIC DNA]</scope>
    <source>
        <strain>P125109</strain>
    </source>
</reference>
<dbReference type="EC" id="2.1.1.176" evidence="1"/>
<dbReference type="EMBL" id="AM933172">
    <property type="protein sequence ID" value="CAR34811.1"/>
    <property type="molecule type" value="Genomic_DNA"/>
</dbReference>
<dbReference type="RefSeq" id="WP_000744594.1">
    <property type="nucleotide sequence ID" value="NC_011294.1"/>
</dbReference>
<dbReference type="SMR" id="B5R1E5"/>
<dbReference type="KEGG" id="set:SEN3236"/>
<dbReference type="HOGENOM" id="CLU_005316_0_4_6"/>
<dbReference type="Proteomes" id="UP000000613">
    <property type="component" value="Chromosome"/>
</dbReference>
<dbReference type="GO" id="GO:0005829">
    <property type="term" value="C:cytosol"/>
    <property type="evidence" value="ECO:0007669"/>
    <property type="project" value="TreeGrafter"/>
</dbReference>
<dbReference type="GO" id="GO:0003723">
    <property type="term" value="F:RNA binding"/>
    <property type="evidence" value="ECO:0007669"/>
    <property type="project" value="UniProtKB-KW"/>
</dbReference>
<dbReference type="GO" id="GO:0009383">
    <property type="term" value="F:rRNA (cytosine-C5-)-methyltransferase activity"/>
    <property type="evidence" value="ECO:0007669"/>
    <property type="project" value="TreeGrafter"/>
</dbReference>
<dbReference type="GO" id="GO:0006355">
    <property type="term" value="P:regulation of DNA-templated transcription"/>
    <property type="evidence" value="ECO:0007669"/>
    <property type="project" value="InterPro"/>
</dbReference>
<dbReference type="GO" id="GO:0070475">
    <property type="term" value="P:rRNA base methylation"/>
    <property type="evidence" value="ECO:0007669"/>
    <property type="project" value="TreeGrafter"/>
</dbReference>
<dbReference type="CDD" id="cd02440">
    <property type="entry name" value="AdoMet_MTases"/>
    <property type="match status" value="1"/>
</dbReference>
<dbReference type="CDD" id="cd00620">
    <property type="entry name" value="Methyltransferase_Sun"/>
    <property type="match status" value="1"/>
</dbReference>
<dbReference type="FunFam" id="1.10.287.730:FF:000001">
    <property type="entry name" value="Ribosomal RNA small subunit methyltransferase B"/>
    <property type="match status" value="1"/>
</dbReference>
<dbReference type="FunFam" id="1.10.940.10:FF:000002">
    <property type="entry name" value="Ribosomal RNA small subunit methyltransferase B"/>
    <property type="match status" value="1"/>
</dbReference>
<dbReference type="FunFam" id="3.30.70.1170:FF:000002">
    <property type="entry name" value="Ribosomal RNA small subunit methyltransferase B"/>
    <property type="match status" value="1"/>
</dbReference>
<dbReference type="FunFam" id="3.40.50.150:FF:000022">
    <property type="entry name" value="Ribosomal RNA small subunit methyltransferase B"/>
    <property type="match status" value="1"/>
</dbReference>
<dbReference type="Gene3D" id="1.10.287.730">
    <property type="entry name" value="Helix hairpin bin"/>
    <property type="match status" value="1"/>
</dbReference>
<dbReference type="Gene3D" id="1.10.940.10">
    <property type="entry name" value="NusB-like"/>
    <property type="match status" value="1"/>
</dbReference>
<dbReference type="Gene3D" id="3.30.70.1170">
    <property type="entry name" value="Sun protein, domain 3"/>
    <property type="match status" value="1"/>
</dbReference>
<dbReference type="Gene3D" id="3.40.50.150">
    <property type="entry name" value="Vaccinia Virus protein VP39"/>
    <property type="match status" value="1"/>
</dbReference>
<dbReference type="HAMAP" id="MF_01856">
    <property type="entry name" value="16SrRNA_methyltr_B"/>
    <property type="match status" value="1"/>
</dbReference>
<dbReference type="InterPro" id="IPR049560">
    <property type="entry name" value="MeTrfase_RsmB-F_NOP2_cat"/>
</dbReference>
<dbReference type="InterPro" id="IPR001678">
    <property type="entry name" value="MeTrfase_RsmB-F_NOP2_dom"/>
</dbReference>
<dbReference type="InterPro" id="IPR035926">
    <property type="entry name" value="NusB-like_sf"/>
</dbReference>
<dbReference type="InterPro" id="IPR006027">
    <property type="entry name" value="NusB_RsmB_TIM44"/>
</dbReference>
<dbReference type="InterPro" id="IPR023267">
    <property type="entry name" value="RCMT"/>
</dbReference>
<dbReference type="InterPro" id="IPR004573">
    <property type="entry name" value="rRNA_ssu_MeTfrase_B"/>
</dbReference>
<dbReference type="InterPro" id="IPR023541">
    <property type="entry name" value="rRNA_ssu_MeTfrase_B_ent"/>
</dbReference>
<dbReference type="InterPro" id="IPR054728">
    <property type="entry name" value="RsmB-like_ferredoxin"/>
</dbReference>
<dbReference type="InterPro" id="IPR048019">
    <property type="entry name" value="RsmB-like_N"/>
</dbReference>
<dbReference type="InterPro" id="IPR018314">
    <property type="entry name" value="RsmB/NOL1/NOP2-like_CS"/>
</dbReference>
<dbReference type="InterPro" id="IPR029063">
    <property type="entry name" value="SAM-dependent_MTases_sf"/>
</dbReference>
<dbReference type="NCBIfam" id="NF008149">
    <property type="entry name" value="PRK10901.1"/>
    <property type="match status" value="1"/>
</dbReference>
<dbReference type="NCBIfam" id="NF011494">
    <property type="entry name" value="PRK14902.1"/>
    <property type="match status" value="1"/>
</dbReference>
<dbReference type="NCBIfam" id="TIGR00563">
    <property type="entry name" value="rsmB"/>
    <property type="match status" value="1"/>
</dbReference>
<dbReference type="PANTHER" id="PTHR22807:SF61">
    <property type="entry name" value="NOL1_NOP2_SUN FAMILY PROTEIN _ ANTITERMINATION NUSB DOMAIN-CONTAINING PROTEIN"/>
    <property type="match status" value="1"/>
</dbReference>
<dbReference type="PANTHER" id="PTHR22807">
    <property type="entry name" value="NOP2 YEAST -RELATED NOL1/NOP2/FMU SUN DOMAIN-CONTAINING"/>
    <property type="match status" value="1"/>
</dbReference>
<dbReference type="Pfam" id="PF01189">
    <property type="entry name" value="Methyltr_RsmB-F"/>
    <property type="match status" value="1"/>
</dbReference>
<dbReference type="Pfam" id="PF01029">
    <property type="entry name" value="NusB"/>
    <property type="match status" value="1"/>
</dbReference>
<dbReference type="Pfam" id="PF22458">
    <property type="entry name" value="RsmF-B_ferredox"/>
    <property type="match status" value="1"/>
</dbReference>
<dbReference type="PRINTS" id="PR02008">
    <property type="entry name" value="RCMTFAMILY"/>
</dbReference>
<dbReference type="SUPFAM" id="SSF48013">
    <property type="entry name" value="NusB-like"/>
    <property type="match status" value="1"/>
</dbReference>
<dbReference type="SUPFAM" id="SSF53335">
    <property type="entry name" value="S-adenosyl-L-methionine-dependent methyltransferases"/>
    <property type="match status" value="1"/>
</dbReference>
<dbReference type="PROSITE" id="PS01153">
    <property type="entry name" value="NOL1_NOP2_SUN"/>
    <property type="match status" value="1"/>
</dbReference>
<dbReference type="PROSITE" id="PS51686">
    <property type="entry name" value="SAM_MT_RSMB_NOP"/>
    <property type="match status" value="1"/>
</dbReference>
<feature type="chain" id="PRO_0000366167" description="Ribosomal RNA small subunit methyltransferase B">
    <location>
        <begin position="1"/>
        <end position="429"/>
    </location>
</feature>
<feature type="region of interest" description="Disordered" evidence="2">
    <location>
        <begin position="397"/>
        <end position="419"/>
    </location>
</feature>
<feature type="compositionally biased region" description="Polar residues" evidence="2">
    <location>
        <begin position="400"/>
        <end position="412"/>
    </location>
</feature>
<feature type="active site" description="Nucleophile" evidence="1">
    <location>
        <position position="375"/>
    </location>
</feature>
<feature type="binding site" evidence="1">
    <location>
        <begin position="254"/>
        <end position="260"/>
    </location>
    <ligand>
        <name>S-adenosyl-L-methionine</name>
        <dbReference type="ChEBI" id="CHEBI:59789"/>
    </ligand>
</feature>
<feature type="binding site" evidence="1">
    <location>
        <position position="277"/>
    </location>
    <ligand>
        <name>S-adenosyl-L-methionine</name>
        <dbReference type="ChEBI" id="CHEBI:59789"/>
    </ligand>
</feature>
<feature type="binding site" evidence="1">
    <location>
        <position position="303"/>
    </location>
    <ligand>
        <name>S-adenosyl-L-methionine</name>
        <dbReference type="ChEBI" id="CHEBI:59789"/>
    </ligand>
</feature>
<feature type="binding site" evidence="1">
    <location>
        <position position="322"/>
    </location>
    <ligand>
        <name>S-adenosyl-L-methionine</name>
        <dbReference type="ChEBI" id="CHEBI:59789"/>
    </ligand>
</feature>
<gene>
    <name evidence="1" type="primary">rsmB</name>
    <name evidence="1" type="synonym">sun</name>
    <name type="ordered locus">SEN3236</name>
</gene>
<keyword id="KW-0963">Cytoplasm</keyword>
<keyword id="KW-0489">Methyltransferase</keyword>
<keyword id="KW-0694">RNA-binding</keyword>
<keyword id="KW-0698">rRNA processing</keyword>
<keyword id="KW-0949">S-adenosyl-L-methionine</keyword>
<keyword id="KW-0808">Transferase</keyword>